<protein>
    <recommendedName>
        <fullName evidence="1">UPF0435 protein SAS1802</fullName>
    </recommendedName>
</protein>
<feature type="chain" id="PRO_0000291418" description="UPF0435 protein SAS1802">
    <location>
        <begin position="1"/>
        <end position="68"/>
    </location>
</feature>
<accession>Q6G854</accession>
<proteinExistence type="inferred from homology"/>
<name>Y1802_STAAS</name>
<gene>
    <name type="ordered locus">SAS1802</name>
</gene>
<reference key="1">
    <citation type="journal article" date="2004" name="Proc. Natl. Acad. Sci. U.S.A.">
        <title>Complete genomes of two clinical Staphylococcus aureus strains: evidence for the rapid evolution of virulence and drug resistance.</title>
        <authorList>
            <person name="Holden M.T.G."/>
            <person name="Feil E.J."/>
            <person name="Lindsay J.A."/>
            <person name="Peacock S.J."/>
            <person name="Day N.P.J."/>
            <person name="Enright M.C."/>
            <person name="Foster T.J."/>
            <person name="Moore C.E."/>
            <person name="Hurst L."/>
            <person name="Atkin R."/>
            <person name="Barron A."/>
            <person name="Bason N."/>
            <person name="Bentley S.D."/>
            <person name="Chillingworth C."/>
            <person name="Chillingworth T."/>
            <person name="Churcher C."/>
            <person name="Clark L."/>
            <person name="Corton C."/>
            <person name="Cronin A."/>
            <person name="Doggett J."/>
            <person name="Dowd L."/>
            <person name="Feltwell T."/>
            <person name="Hance Z."/>
            <person name="Harris B."/>
            <person name="Hauser H."/>
            <person name="Holroyd S."/>
            <person name="Jagels K."/>
            <person name="James K.D."/>
            <person name="Lennard N."/>
            <person name="Line A."/>
            <person name="Mayes R."/>
            <person name="Moule S."/>
            <person name="Mungall K."/>
            <person name="Ormond D."/>
            <person name="Quail M.A."/>
            <person name="Rabbinowitsch E."/>
            <person name="Rutherford K.M."/>
            <person name="Sanders M."/>
            <person name="Sharp S."/>
            <person name="Simmonds M."/>
            <person name="Stevens K."/>
            <person name="Whitehead S."/>
            <person name="Barrell B.G."/>
            <person name="Spratt B.G."/>
            <person name="Parkhill J."/>
        </authorList>
    </citation>
    <scope>NUCLEOTIDE SEQUENCE [LARGE SCALE GENOMIC DNA]</scope>
    <source>
        <strain>MSSA476</strain>
    </source>
</reference>
<sequence length="68" mass="7775">MAMTNEEKVLAIREKLNIVNQGLLDPEKYKNANEEELTDIYDFVQSRERLSPSEVTAIADALGQLRHD</sequence>
<dbReference type="EMBL" id="BX571857">
    <property type="protein sequence ID" value="CAG43607.1"/>
    <property type="status" value="ALT_INIT"/>
    <property type="molecule type" value="Genomic_DNA"/>
</dbReference>
<dbReference type="SMR" id="Q6G854"/>
<dbReference type="KEGG" id="sas:SAS1802"/>
<dbReference type="HOGENOM" id="CLU_199533_0_0_9"/>
<dbReference type="HAMAP" id="MF_00829">
    <property type="entry name" value="UPF0435"/>
    <property type="match status" value="1"/>
</dbReference>
<dbReference type="InterPro" id="IPR009507">
    <property type="entry name" value="UPF0435"/>
</dbReference>
<dbReference type="Pfam" id="PF06569">
    <property type="entry name" value="DUF1128"/>
    <property type="match status" value="1"/>
</dbReference>
<comment type="similarity">
    <text evidence="1">Belongs to the UPF0435 family.</text>
</comment>
<comment type="sequence caution" evidence="2">
    <conflict type="erroneous initiation">
        <sequence resource="EMBL-CDS" id="CAG43607"/>
    </conflict>
</comment>
<organism>
    <name type="scientific">Staphylococcus aureus (strain MSSA476)</name>
    <dbReference type="NCBI Taxonomy" id="282459"/>
    <lineage>
        <taxon>Bacteria</taxon>
        <taxon>Bacillati</taxon>
        <taxon>Bacillota</taxon>
        <taxon>Bacilli</taxon>
        <taxon>Bacillales</taxon>
        <taxon>Staphylococcaceae</taxon>
        <taxon>Staphylococcus</taxon>
    </lineage>
</organism>
<evidence type="ECO:0000255" key="1">
    <source>
        <dbReference type="HAMAP-Rule" id="MF_00829"/>
    </source>
</evidence>
<evidence type="ECO:0000305" key="2"/>